<evidence type="ECO:0000255" key="1">
    <source>
        <dbReference type="HAMAP-Rule" id="MF_01849"/>
    </source>
</evidence>
<evidence type="ECO:0000255" key="2">
    <source>
        <dbReference type="PROSITE-ProRule" id="PRU01266"/>
    </source>
</evidence>
<name>RLMN_THEP3</name>
<gene>
    <name evidence="1" type="primary">rlmN</name>
    <name type="ordered locus">Teth39_1315</name>
</gene>
<sequence>MYNLKDMTLEEMEEFFVNIGESRYRAKQIYKWIYGKKVTDFDQMTDISKNLRSKLKEIAYVSQLKIEERRVSEIDDTVKYLFLLEDGNIIEGVAIKYRFGNTACVSTQVGCNMRCSFCASAIGGKVRDLKASEMVDQVMAIDSDYGKISNIVLMGSGEPFDNYDEVMKFIKIVNNPHGLGIGSRHITISTCGIVPKIYQFADEKLQVNLSISLHAPNDELRTQLMPINKAYPLEELMKACKYYVDKTRRRITFEYSLIEGVNDKKEHAYQLVDLLKGMLCHINLIPINYVREIGFKKANNEKVMMFKRIIEDAGISCTVRRELGSDIEAACGQLRRKYLKER</sequence>
<proteinExistence type="inferred from homology"/>
<keyword id="KW-0004">4Fe-4S</keyword>
<keyword id="KW-0963">Cytoplasm</keyword>
<keyword id="KW-1015">Disulfide bond</keyword>
<keyword id="KW-0408">Iron</keyword>
<keyword id="KW-0411">Iron-sulfur</keyword>
<keyword id="KW-0479">Metal-binding</keyword>
<keyword id="KW-0489">Methyltransferase</keyword>
<keyword id="KW-1185">Reference proteome</keyword>
<keyword id="KW-0698">rRNA processing</keyword>
<keyword id="KW-0949">S-adenosyl-L-methionine</keyword>
<keyword id="KW-0808">Transferase</keyword>
<keyword id="KW-0819">tRNA processing</keyword>
<feature type="chain" id="PRO_0000350494" description="Probable dual-specificity RNA methyltransferase RlmN">
    <location>
        <begin position="1"/>
        <end position="342"/>
    </location>
</feature>
<feature type="domain" description="Radical SAM core" evidence="2">
    <location>
        <begin position="97"/>
        <end position="326"/>
    </location>
</feature>
<feature type="active site" description="Proton acceptor" evidence="1">
    <location>
        <position position="91"/>
    </location>
</feature>
<feature type="active site" description="S-methylcysteine intermediate" evidence="1">
    <location>
        <position position="331"/>
    </location>
</feature>
<feature type="binding site" evidence="1">
    <location>
        <position position="111"/>
    </location>
    <ligand>
        <name>[4Fe-4S] cluster</name>
        <dbReference type="ChEBI" id="CHEBI:49883"/>
        <note>4Fe-4S-S-AdoMet</note>
    </ligand>
</feature>
<feature type="binding site" evidence="1">
    <location>
        <position position="115"/>
    </location>
    <ligand>
        <name>[4Fe-4S] cluster</name>
        <dbReference type="ChEBI" id="CHEBI:49883"/>
        <note>4Fe-4S-S-AdoMet</note>
    </ligand>
</feature>
<feature type="binding site" evidence="1">
    <location>
        <position position="118"/>
    </location>
    <ligand>
        <name>[4Fe-4S] cluster</name>
        <dbReference type="ChEBI" id="CHEBI:49883"/>
        <note>4Fe-4S-S-AdoMet</note>
    </ligand>
</feature>
<feature type="binding site" evidence="1">
    <location>
        <begin position="157"/>
        <end position="158"/>
    </location>
    <ligand>
        <name>S-adenosyl-L-methionine</name>
        <dbReference type="ChEBI" id="CHEBI:59789"/>
    </ligand>
</feature>
<feature type="binding site" evidence="1">
    <location>
        <position position="189"/>
    </location>
    <ligand>
        <name>S-adenosyl-L-methionine</name>
        <dbReference type="ChEBI" id="CHEBI:59789"/>
    </ligand>
</feature>
<feature type="binding site" evidence="1">
    <location>
        <begin position="212"/>
        <end position="214"/>
    </location>
    <ligand>
        <name>S-adenosyl-L-methionine</name>
        <dbReference type="ChEBI" id="CHEBI:59789"/>
    </ligand>
</feature>
<feature type="binding site" evidence="1">
    <location>
        <position position="288"/>
    </location>
    <ligand>
        <name>S-adenosyl-L-methionine</name>
        <dbReference type="ChEBI" id="CHEBI:59789"/>
    </ligand>
</feature>
<feature type="disulfide bond" description="(transient)" evidence="1">
    <location>
        <begin position="104"/>
        <end position="331"/>
    </location>
</feature>
<reference key="1">
    <citation type="submission" date="2008-01" db="EMBL/GenBank/DDBJ databases">
        <title>Complete sequence of Thermoanaerobacter pseudethanolicus 39E.</title>
        <authorList>
            <person name="Copeland A."/>
            <person name="Lucas S."/>
            <person name="Lapidus A."/>
            <person name="Barry K."/>
            <person name="Glavina del Rio T."/>
            <person name="Dalin E."/>
            <person name="Tice H."/>
            <person name="Pitluck S."/>
            <person name="Bruce D."/>
            <person name="Goodwin L."/>
            <person name="Saunders E."/>
            <person name="Brettin T."/>
            <person name="Detter J.C."/>
            <person name="Han C."/>
            <person name="Schmutz J."/>
            <person name="Larimer F."/>
            <person name="Land M."/>
            <person name="Hauser L."/>
            <person name="Kyrpides N."/>
            <person name="Lykidis A."/>
            <person name="Hemme C."/>
            <person name="Fields M.W."/>
            <person name="He Z."/>
            <person name="Zhou J."/>
            <person name="Richardson P."/>
        </authorList>
    </citation>
    <scope>NUCLEOTIDE SEQUENCE [LARGE SCALE GENOMIC DNA]</scope>
    <source>
        <strain>ATCC 33223 / DSM 2355 / 39E</strain>
    </source>
</reference>
<protein>
    <recommendedName>
        <fullName evidence="1">Probable dual-specificity RNA methyltransferase RlmN</fullName>
        <ecNumber evidence="1">2.1.1.192</ecNumber>
    </recommendedName>
    <alternativeName>
        <fullName evidence="1">23S rRNA (adenine(2503)-C(2))-methyltransferase</fullName>
    </alternativeName>
    <alternativeName>
        <fullName evidence="1">23S rRNA m2A2503 methyltransferase</fullName>
    </alternativeName>
    <alternativeName>
        <fullName evidence="1">Ribosomal RNA large subunit methyltransferase N</fullName>
    </alternativeName>
    <alternativeName>
        <fullName evidence="1">tRNA (adenine(37)-C(2))-methyltransferase</fullName>
    </alternativeName>
    <alternativeName>
        <fullName evidence="1">tRNA m2A37 methyltransferase</fullName>
    </alternativeName>
</protein>
<organism>
    <name type="scientific">Thermoanaerobacter pseudethanolicus (strain ATCC 33223 / 39E)</name>
    <name type="common">Clostridium thermohydrosulfuricum</name>
    <dbReference type="NCBI Taxonomy" id="340099"/>
    <lineage>
        <taxon>Bacteria</taxon>
        <taxon>Bacillati</taxon>
        <taxon>Bacillota</taxon>
        <taxon>Clostridia</taxon>
        <taxon>Thermoanaerobacterales</taxon>
        <taxon>Thermoanaerobacteraceae</taxon>
        <taxon>Thermoanaerobacter</taxon>
    </lineage>
</organism>
<dbReference type="EC" id="2.1.1.192" evidence="1"/>
<dbReference type="EMBL" id="CP000924">
    <property type="protein sequence ID" value="ABY94969.1"/>
    <property type="molecule type" value="Genomic_DNA"/>
</dbReference>
<dbReference type="RefSeq" id="WP_003868213.1">
    <property type="nucleotide sequence ID" value="NC_010321.1"/>
</dbReference>
<dbReference type="SMR" id="B0KA06"/>
<dbReference type="STRING" id="340099.Teth39_1315"/>
<dbReference type="KEGG" id="tpd:Teth39_1315"/>
<dbReference type="eggNOG" id="COG0820">
    <property type="taxonomic scope" value="Bacteria"/>
</dbReference>
<dbReference type="HOGENOM" id="CLU_029101_0_1_9"/>
<dbReference type="Proteomes" id="UP000002156">
    <property type="component" value="Chromosome"/>
</dbReference>
<dbReference type="GO" id="GO:0005737">
    <property type="term" value="C:cytoplasm"/>
    <property type="evidence" value="ECO:0007669"/>
    <property type="project" value="UniProtKB-SubCell"/>
</dbReference>
<dbReference type="GO" id="GO:0051539">
    <property type="term" value="F:4 iron, 4 sulfur cluster binding"/>
    <property type="evidence" value="ECO:0007669"/>
    <property type="project" value="UniProtKB-UniRule"/>
</dbReference>
<dbReference type="GO" id="GO:0046872">
    <property type="term" value="F:metal ion binding"/>
    <property type="evidence" value="ECO:0007669"/>
    <property type="project" value="UniProtKB-KW"/>
</dbReference>
<dbReference type="GO" id="GO:0070040">
    <property type="term" value="F:rRNA (adenine(2503)-C2-)-methyltransferase activity"/>
    <property type="evidence" value="ECO:0007669"/>
    <property type="project" value="UniProtKB-UniRule"/>
</dbReference>
<dbReference type="GO" id="GO:0019843">
    <property type="term" value="F:rRNA binding"/>
    <property type="evidence" value="ECO:0007669"/>
    <property type="project" value="UniProtKB-UniRule"/>
</dbReference>
<dbReference type="GO" id="GO:0002935">
    <property type="term" value="F:tRNA (adenine(37)-C2)-methyltransferase activity"/>
    <property type="evidence" value="ECO:0007669"/>
    <property type="project" value="UniProtKB-UniRule"/>
</dbReference>
<dbReference type="GO" id="GO:0000049">
    <property type="term" value="F:tRNA binding"/>
    <property type="evidence" value="ECO:0007669"/>
    <property type="project" value="UniProtKB-UniRule"/>
</dbReference>
<dbReference type="GO" id="GO:0070475">
    <property type="term" value="P:rRNA base methylation"/>
    <property type="evidence" value="ECO:0007669"/>
    <property type="project" value="UniProtKB-UniRule"/>
</dbReference>
<dbReference type="GO" id="GO:0030488">
    <property type="term" value="P:tRNA methylation"/>
    <property type="evidence" value="ECO:0007669"/>
    <property type="project" value="UniProtKB-UniRule"/>
</dbReference>
<dbReference type="CDD" id="cd01335">
    <property type="entry name" value="Radical_SAM"/>
    <property type="match status" value="1"/>
</dbReference>
<dbReference type="FunFam" id="1.10.150.530:FF:000003">
    <property type="entry name" value="Dual-specificity RNA methyltransferase RlmN"/>
    <property type="match status" value="1"/>
</dbReference>
<dbReference type="FunFam" id="3.20.20.70:FF:000014">
    <property type="entry name" value="Probable dual-specificity RNA methyltransferase RlmN"/>
    <property type="match status" value="1"/>
</dbReference>
<dbReference type="Gene3D" id="1.10.150.530">
    <property type="match status" value="1"/>
</dbReference>
<dbReference type="Gene3D" id="3.20.20.70">
    <property type="entry name" value="Aldolase class I"/>
    <property type="match status" value="1"/>
</dbReference>
<dbReference type="HAMAP" id="MF_01849">
    <property type="entry name" value="RNA_methyltr_RlmN"/>
    <property type="match status" value="1"/>
</dbReference>
<dbReference type="InterPro" id="IPR013785">
    <property type="entry name" value="Aldolase_TIM"/>
</dbReference>
<dbReference type="InterPro" id="IPR040072">
    <property type="entry name" value="Methyltransferase_A"/>
</dbReference>
<dbReference type="InterPro" id="IPR048641">
    <property type="entry name" value="RlmN_N"/>
</dbReference>
<dbReference type="InterPro" id="IPR027492">
    <property type="entry name" value="RNA_MTrfase_RlmN"/>
</dbReference>
<dbReference type="InterPro" id="IPR004383">
    <property type="entry name" value="rRNA_lsu_MTrfase_RlmN/Cfr"/>
</dbReference>
<dbReference type="InterPro" id="IPR007197">
    <property type="entry name" value="rSAM"/>
</dbReference>
<dbReference type="NCBIfam" id="TIGR00048">
    <property type="entry name" value="rRNA_mod_RlmN"/>
    <property type="match status" value="1"/>
</dbReference>
<dbReference type="PANTHER" id="PTHR30544">
    <property type="entry name" value="23S RRNA METHYLTRANSFERASE"/>
    <property type="match status" value="1"/>
</dbReference>
<dbReference type="PANTHER" id="PTHR30544:SF5">
    <property type="entry name" value="RADICAL SAM CORE DOMAIN-CONTAINING PROTEIN"/>
    <property type="match status" value="1"/>
</dbReference>
<dbReference type="Pfam" id="PF04055">
    <property type="entry name" value="Radical_SAM"/>
    <property type="match status" value="1"/>
</dbReference>
<dbReference type="Pfam" id="PF21016">
    <property type="entry name" value="RlmN_N"/>
    <property type="match status" value="1"/>
</dbReference>
<dbReference type="PIRSF" id="PIRSF006004">
    <property type="entry name" value="CHP00048"/>
    <property type="match status" value="1"/>
</dbReference>
<dbReference type="SFLD" id="SFLDF00275">
    <property type="entry name" value="adenosine_C2_methyltransferase"/>
    <property type="match status" value="1"/>
</dbReference>
<dbReference type="SFLD" id="SFLDS00029">
    <property type="entry name" value="Radical_SAM"/>
    <property type="match status" value="1"/>
</dbReference>
<dbReference type="SUPFAM" id="SSF102114">
    <property type="entry name" value="Radical SAM enzymes"/>
    <property type="match status" value="1"/>
</dbReference>
<dbReference type="PROSITE" id="PS51918">
    <property type="entry name" value="RADICAL_SAM"/>
    <property type="match status" value="1"/>
</dbReference>
<accession>B0KA06</accession>
<comment type="function">
    <text evidence="1">Specifically methylates position 2 of adenine 2503 in 23S rRNA and position 2 of adenine 37 in tRNAs.</text>
</comment>
<comment type="catalytic activity">
    <reaction evidence="1">
        <text>adenosine(2503) in 23S rRNA + 2 reduced [2Fe-2S]-[ferredoxin] + 2 S-adenosyl-L-methionine = 2-methyladenosine(2503) in 23S rRNA + 5'-deoxyadenosine + L-methionine + 2 oxidized [2Fe-2S]-[ferredoxin] + S-adenosyl-L-homocysteine</text>
        <dbReference type="Rhea" id="RHEA:42916"/>
        <dbReference type="Rhea" id="RHEA-COMP:10000"/>
        <dbReference type="Rhea" id="RHEA-COMP:10001"/>
        <dbReference type="Rhea" id="RHEA-COMP:10152"/>
        <dbReference type="Rhea" id="RHEA-COMP:10282"/>
        <dbReference type="ChEBI" id="CHEBI:17319"/>
        <dbReference type="ChEBI" id="CHEBI:33737"/>
        <dbReference type="ChEBI" id="CHEBI:33738"/>
        <dbReference type="ChEBI" id="CHEBI:57844"/>
        <dbReference type="ChEBI" id="CHEBI:57856"/>
        <dbReference type="ChEBI" id="CHEBI:59789"/>
        <dbReference type="ChEBI" id="CHEBI:74411"/>
        <dbReference type="ChEBI" id="CHEBI:74497"/>
        <dbReference type="EC" id="2.1.1.192"/>
    </reaction>
</comment>
<comment type="catalytic activity">
    <reaction evidence="1">
        <text>adenosine(37) in tRNA + 2 reduced [2Fe-2S]-[ferredoxin] + 2 S-adenosyl-L-methionine = 2-methyladenosine(37) in tRNA + 5'-deoxyadenosine + L-methionine + 2 oxidized [2Fe-2S]-[ferredoxin] + S-adenosyl-L-homocysteine</text>
        <dbReference type="Rhea" id="RHEA:43332"/>
        <dbReference type="Rhea" id="RHEA-COMP:10000"/>
        <dbReference type="Rhea" id="RHEA-COMP:10001"/>
        <dbReference type="Rhea" id="RHEA-COMP:10162"/>
        <dbReference type="Rhea" id="RHEA-COMP:10485"/>
        <dbReference type="ChEBI" id="CHEBI:17319"/>
        <dbReference type="ChEBI" id="CHEBI:33737"/>
        <dbReference type="ChEBI" id="CHEBI:33738"/>
        <dbReference type="ChEBI" id="CHEBI:57844"/>
        <dbReference type="ChEBI" id="CHEBI:57856"/>
        <dbReference type="ChEBI" id="CHEBI:59789"/>
        <dbReference type="ChEBI" id="CHEBI:74411"/>
        <dbReference type="ChEBI" id="CHEBI:74497"/>
        <dbReference type="EC" id="2.1.1.192"/>
    </reaction>
</comment>
<comment type="cofactor">
    <cofactor evidence="1">
        <name>[4Fe-4S] cluster</name>
        <dbReference type="ChEBI" id="CHEBI:49883"/>
    </cofactor>
    <text evidence="1">Binds 1 [4Fe-4S] cluster. The cluster is coordinated with 3 cysteines and an exchangeable S-adenosyl-L-methionine.</text>
</comment>
<comment type="subcellular location">
    <subcellularLocation>
        <location evidence="1">Cytoplasm</location>
    </subcellularLocation>
</comment>
<comment type="miscellaneous">
    <text evidence="1">Reaction proceeds by a ping-pong mechanism involving intermediate methylation of a conserved cysteine residue.</text>
</comment>
<comment type="similarity">
    <text evidence="1">Belongs to the radical SAM superfamily. RlmN family.</text>
</comment>